<dbReference type="EC" id="3.1.3.16" evidence="2"/>
<dbReference type="EMBL" id="M23591">
    <property type="protein sequence ID" value="AAA41912.1"/>
    <property type="molecule type" value="mRNA"/>
</dbReference>
<dbReference type="EMBL" id="X16044">
    <property type="protein sequence ID" value="CAA34167.1"/>
    <property type="molecule type" value="mRNA"/>
</dbReference>
<dbReference type="EMBL" id="X14087">
    <property type="protein sequence ID" value="CAA32249.1"/>
    <property type="molecule type" value="mRNA"/>
</dbReference>
<dbReference type="EMBL" id="M58438">
    <property type="protein sequence ID" value="AAA41911.1"/>
    <property type="molecule type" value="mRNA"/>
</dbReference>
<dbReference type="EMBL" id="BC085926">
    <property type="protein sequence ID" value="AAH85926.1"/>
    <property type="molecule type" value="mRNA"/>
</dbReference>
<dbReference type="EMBL" id="M58439">
    <property type="protein sequence ID" value="AAA41913.1"/>
    <property type="molecule type" value="mRNA"/>
</dbReference>
<dbReference type="PIR" id="S08486">
    <property type="entry name" value="PART2B"/>
</dbReference>
<dbReference type="RefSeq" id="NP_058736.1">
    <property type="nucleotide sequence ID" value="NM_017040.3"/>
</dbReference>
<dbReference type="SMR" id="P62716"/>
<dbReference type="BioGRID" id="246805">
    <property type="interactions" value="2"/>
</dbReference>
<dbReference type="FunCoup" id="P62716">
    <property type="interactions" value="3608"/>
</dbReference>
<dbReference type="IntAct" id="P62716">
    <property type="interactions" value="1"/>
</dbReference>
<dbReference type="STRING" id="10116.ENSRNOP00000020663"/>
<dbReference type="iPTMnet" id="P62716"/>
<dbReference type="PhosphoSitePlus" id="P62716"/>
<dbReference type="SwissPalm" id="P62716"/>
<dbReference type="jPOST" id="P62716"/>
<dbReference type="PaxDb" id="10116-ENSRNOP00000020663"/>
<dbReference type="Ensembl" id="ENSRNOT00000020663.4">
    <property type="protein sequence ID" value="ENSRNOP00000020663.1"/>
    <property type="gene ID" value="ENSRNOG00000015182.7"/>
</dbReference>
<dbReference type="GeneID" id="24673"/>
<dbReference type="KEGG" id="rno:24673"/>
<dbReference type="UCSC" id="RGD:3381">
    <property type="organism name" value="rat"/>
</dbReference>
<dbReference type="AGR" id="RGD:3381"/>
<dbReference type="CTD" id="5516"/>
<dbReference type="RGD" id="3381">
    <property type="gene designation" value="Ppp2cb"/>
</dbReference>
<dbReference type="eggNOG" id="KOG0371">
    <property type="taxonomic scope" value="Eukaryota"/>
</dbReference>
<dbReference type="GeneTree" id="ENSGT00550000074618"/>
<dbReference type="HOGENOM" id="CLU_004962_0_5_1"/>
<dbReference type="InParanoid" id="P62716"/>
<dbReference type="OMA" id="YRCENQA"/>
<dbReference type="OrthoDB" id="1930084at2759"/>
<dbReference type="PhylomeDB" id="P62716"/>
<dbReference type="TreeFam" id="TF105559"/>
<dbReference type="Reactome" id="R-RNO-113501">
    <property type="pathway name" value="Inhibition of replication initiation of damaged DNA by RB1/E2F1"/>
</dbReference>
<dbReference type="Reactome" id="R-RNO-1295596">
    <property type="pathway name" value="Spry regulation of FGF signaling"/>
</dbReference>
<dbReference type="Reactome" id="R-RNO-141444">
    <property type="pathway name" value="Amplification of signal from unattached kinetochores via a MAD2 inhibitory signal"/>
</dbReference>
<dbReference type="Reactome" id="R-RNO-180024">
    <property type="pathway name" value="DARPP-32 events"/>
</dbReference>
<dbReference type="Reactome" id="R-RNO-195253">
    <property type="pathway name" value="Degradation of beta-catenin by the destruction complex"/>
</dbReference>
<dbReference type="Reactome" id="R-RNO-196299">
    <property type="pathway name" value="Beta-catenin phosphorylation cascade"/>
</dbReference>
<dbReference type="Reactome" id="R-RNO-198753">
    <property type="pathway name" value="ERK/MAPK targets"/>
</dbReference>
<dbReference type="Reactome" id="R-RNO-202670">
    <property type="pathway name" value="ERKs are inactivated"/>
</dbReference>
<dbReference type="Reactome" id="R-RNO-2467813">
    <property type="pathway name" value="Separation of Sister Chromatids"/>
</dbReference>
<dbReference type="Reactome" id="R-RNO-2500257">
    <property type="pathway name" value="Resolution of Sister Chromatid Cohesion"/>
</dbReference>
<dbReference type="Reactome" id="R-RNO-389356">
    <property type="pathway name" value="Co-stimulation by CD28"/>
</dbReference>
<dbReference type="Reactome" id="R-RNO-389513">
    <property type="pathway name" value="Co-inhibition by CTLA4"/>
</dbReference>
<dbReference type="Reactome" id="R-RNO-432142">
    <property type="pathway name" value="Platelet sensitization by LDL"/>
</dbReference>
<dbReference type="Reactome" id="R-RNO-4641262">
    <property type="pathway name" value="Disassembly of the destruction complex and recruitment of AXIN to the membrane"/>
</dbReference>
<dbReference type="Reactome" id="R-RNO-5663220">
    <property type="pathway name" value="RHO GTPases Activate Formins"/>
</dbReference>
<dbReference type="Reactome" id="R-RNO-5673000">
    <property type="pathway name" value="RAF activation"/>
</dbReference>
<dbReference type="Reactome" id="R-RNO-5675221">
    <property type="pathway name" value="Negative regulation of MAPK pathway"/>
</dbReference>
<dbReference type="Reactome" id="R-RNO-6804757">
    <property type="pathway name" value="Regulation of TP53 Degradation"/>
</dbReference>
<dbReference type="Reactome" id="R-RNO-6811558">
    <property type="pathway name" value="PI5P, PP2A and IER3 Regulate PI3K/AKT Signaling"/>
</dbReference>
<dbReference type="Reactome" id="R-RNO-68877">
    <property type="pathway name" value="Mitotic Prometaphase"/>
</dbReference>
<dbReference type="Reactome" id="R-RNO-69231">
    <property type="pathway name" value="Cyclin D associated events in G1"/>
</dbReference>
<dbReference type="Reactome" id="R-RNO-69273">
    <property type="pathway name" value="Cyclin A/B1/B2 associated events during G2/M transition"/>
</dbReference>
<dbReference type="Reactome" id="R-RNO-9648025">
    <property type="pathway name" value="EML4 and NUDC in mitotic spindle formation"/>
</dbReference>
<dbReference type="Reactome" id="R-RNO-9833482">
    <property type="pathway name" value="PKR-mediated signaling"/>
</dbReference>
<dbReference type="PRO" id="PR:P62716"/>
<dbReference type="Proteomes" id="UP000002494">
    <property type="component" value="Chromosome 16"/>
</dbReference>
<dbReference type="Bgee" id="ENSRNOG00000015182">
    <property type="expression patterns" value="Expressed in cerebellum and 20 other cell types or tissues"/>
</dbReference>
<dbReference type="GO" id="GO:0000775">
    <property type="term" value="C:chromosome, centromeric region"/>
    <property type="evidence" value="ECO:0007669"/>
    <property type="project" value="UniProtKB-SubCell"/>
</dbReference>
<dbReference type="GO" id="GO:0005737">
    <property type="term" value="C:cytoplasm"/>
    <property type="evidence" value="ECO:0000266"/>
    <property type="project" value="RGD"/>
</dbReference>
<dbReference type="GO" id="GO:0005829">
    <property type="term" value="C:cytosol"/>
    <property type="evidence" value="ECO:0000318"/>
    <property type="project" value="GO_Central"/>
</dbReference>
<dbReference type="GO" id="GO:0090443">
    <property type="term" value="C:FAR/SIN/STRIPAK complex"/>
    <property type="evidence" value="ECO:0000250"/>
    <property type="project" value="UniProtKB"/>
</dbReference>
<dbReference type="GO" id="GO:0005634">
    <property type="term" value="C:nucleus"/>
    <property type="evidence" value="ECO:0007669"/>
    <property type="project" value="UniProtKB-SubCell"/>
</dbReference>
<dbReference type="GO" id="GO:0000159">
    <property type="term" value="C:protein phosphatase type 2A complex"/>
    <property type="evidence" value="ECO:0000266"/>
    <property type="project" value="RGD"/>
</dbReference>
<dbReference type="GO" id="GO:0000922">
    <property type="term" value="C:spindle pole"/>
    <property type="evidence" value="ECO:0007669"/>
    <property type="project" value="UniProtKB-SubCell"/>
</dbReference>
<dbReference type="GO" id="GO:0046872">
    <property type="term" value="F:metal ion binding"/>
    <property type="evidence" value="ECO:0007669"/>
    <property type="project" value="UniProtKB-KW"/>
</dbReference>
<dbReference type="GO" id="GO:0004721">
    <property type="term" value="F:phosphoprotein phosphatase activity"/>
    <property type="evidence" value="ECO:0000314"/>
    <property type="project" value="UniProtKB"/>
</dbReference>
<dbReference type="GO" id="GO:0046982">
    <property type="term" value="F:protein heterodimerization activity"/>
    <property type="evidence" value="ECO:0000250"/>
    <property type="project" value="UniProtKB"/>
</dbReference>
<dbReference type="GO" id="GO:0004722">
    <property type="term" value="F:protein serine/threonine phosphatase activity"/>
    <property type="evidence" value="ECO:0000314"/>
    <property type="project" value="RGD"/>
</dbReference>
<dbReference type="GO" id="GO:0044325">
    <property type="term" value="F:transmembrane transporter binding"/>
    <property type="evidence" value="ECO:0000353"/>
    <property type="project" value="RGD"/>
</dbReference>
<dbReference type="GO" id="GO:0008637">
    <property type="term" value="P:apoptotic mitochondrial changes"/>
    <property type="evidence" value="ECO:0000266"/>
    <property type="project" value="RGD"/>
</dbReference>
<dbReference type="GO" id="GO:0000278">
    <property type="term" value="P:mitotic cell cycle"/>
    <property type="evidence" value="ECO:0000318"/>
    <property type="project" value="GO_Central"/>
</dbReference>
<dbReference type="GO" id="GO:0043124">
    <property type="term" value="P:negative regulation of canonical NF-kappaB signal transduction"/>
    <property type="evidence" value="ECO:0007669"/>
    <property type="project" value="Ensembl"/>
</dbReference>
<dbReference type="GO" id="GO:0010629">
    <property type="term" value="P:negative regulation of gene expression"/>
    <property type="evidence" value="ECO:0000266"/>
    <property type="project" value="RGD"/>
</dbReference>
<dbReference type="GO" id="GO:0046580">
    <property type="term" value="P:negative regulation of Ras protein signal transduction"/>
    <property type="evidence" value="ECO:0000314"/>
    <property type="project" value="RGD"/>
</dbReference>
<dbReference type="GO" id="GO:0010804">
    <property type="term" value="P:negative regulation of tumor necrosis factor-mediated signaling pathway"/>
    <property type="evidence" value="ECO:0000266"/>
    <property type="project" value="RGD"/>
</dbReference>
<dbReference type="GO" id="GO:0043161">
    <property type="term" value="P:proteasome-mediated ubiquitin-dependent protein catabolic process"/>
    <property type="evidence" value="ECO:0000266"/>
    <property type="project" value="RGD"/>
</dbReference>
<dbReference type="GO" id="GO:0010468">
    <property type="term" value="P:regulation of gene expression"/>
    <property type="evidence" value="ECO:0000266"/>
    <property type="project" value="RGD"/>
</dbReference>
<dbReference type="GO" id="GO:0031113">
    <property type="term" value="P:regulation of microtubule polymerization"/>
    <property type="evidence" value="ECO:0000315"/>
    <property type="project" value="ARUK-UCL"/>
</dbReference>
<dbReference type="GO" id="GO:0046677">
    <property type="term" value="P:response to antibiotic"/>
    <property type="evidence" value="ECO:0000266"/>
    <property type="project" value="RGD"/>
</dbReference>
<dbReference type="GO" id="GO:0034976">
    <property type="term" value="P:response to endoplasmic reticulum stress"/>
    <property type="evidence" value="ECO:0000266"/>
    <property type="project" value="RGD"/>
</dbReference>
<dbReference type="GO" id="GO:0042542">
    <property type="term" value="P:response to hydrogen peroxide"/>
    <property type="evidence" value="ECO:0000266"/>
    <property type="project" value="RGD"/>
</dbReference>
<dbReference type="GO" id="GO:0010288">
    <property type="term" value="P:response to lead ion"/>
    <property type="evidence" value="ECO:0000314"/>
    <property type="project" value="ARUK-UCL"/>
</dbReference>
<dbReference type="CDD" id="cd07415">
    <property type="entry name" value="MPP_PP2A_PP4_PP6"/>
    <property type="match status" value="1"/>
</dbReference>
<dbReference type="FunFam" id="3.60.21.10:FF:000003">
    <property type="entry name" value="Serine/threonine-protein phosphatase"/>
    <property type="match status" value="1"/>
</dbReference>
<dbReference type="Gene3D" id="3.60.21.10">
    <property type="match status" value="1"/>
</dbReference>
<dbReference type="InterPro" id="IPR004843">
    <property type="entry name" value="Calcineurin-like_PHP_ApaH"/>
</dbReference>
<dbReference type="InterPro" id="IPR029052">
    <property type="entry name" value="Metallo-depent_PP-like"/>
</dbReference>
<dbReference type="InterPro" id="IPR047129">
    <property type="entry name" value="PPA2-like"/>
</dbReference>
<dbReference type="InterPro" id="IPR006186">
    <property type="entry name" value="Ser/Thr-sp_prot-phosphatase"/>
</dbReference>
<dbReference type="PANTHER" id="PTHR45619">
    <property type="entry name" value="SERINE/THREONINE-PROTEIN PHOSPHATASE PP2A-RELATED"/>
    <property type="match status" value="1"/>
</dbReference>
<dbReference type="Pfam" id="PF00149">
    <property type="entry name" value="Metallophos"/>
    <property type="match status" value="1"/>
</dbReference>
<dbReference type="PRINTS" id="PR00114">
    <property type="entry name" value="STPHPHTASE"/>
</dbReference>
<dbReference type="SMART" id="SM00156">
    <property type="entry name" value="PP2Ac"/>
    <property type="match status" value="1"/>
</dbReference>
<dbReference type="SUPFAM" id="SSF56300">
    <property type="entry name" value="Metallo-dependent phosphatases"/>
    <property type="match status" value="1"/>
</dbReference>
<dbReference type="PROSITE" id="PS00125">
    <property type="entry name" value="SER_THR_PHOSPHATASE"/>
    <property type="match status" value="1"/>
</dbReference>
<sequence>MDDKAFTKELDQWVEQLNECKQLNENQVRTLCEKAKEILTKESNVQEVRCPVTVCGDVHGQFHDLMELFRIGGKSPDTNYLFMGDYVDRGYYSVETVTLLVALKVRYPERITILRGNHESRQITQVYGFYDECLRKYGNANVWKYFTDLFDYLPLTALVDGQIFCLHGGLSPSIDTLDHIRALDRLQEVPHEGPMCDLLWSDPDDRGGWGISPRGAGYTFGQDISETFNHANGLTLVSRAHQLVMEGYNWCHDRNVVTIFSAPNYCYRCGNQAAIMELDDTLKYSFLQFDPAPRRGEPHVTRRTPDYFL</sequence>
<protein>
    <recommendedName>
        <fullName>Serine/threonine-protein phosphatase 2A catalytic subunit beta isoform</fullName>
        <shortName>PP2A-beta</shortName>
        <ecNumber evidence="2">3.1.3.16</ecNumber>
    </recommendedName>
</protein>
<evidence type="ECO:0000250" key="1"/>
<evidence type="ECO:0000250" key="2">
    <source>
        <dbReference type="UniProtKB" id="P62714"/>
    </source>
</evidence>
<evidence type="ECO:0000250" key="3">
    <source>
        <dbReference type="UniProtKB" id="P62715"/>
    </source>
</evidence>
<evidence type="ECO:0000250" key="4">
    <source>
        <dbReference type="UniProtKB" id="Q0P594"/>
    </source>
</evidence>
<evidence type="ECO:0000305" key="5"/>
<accession>P62716</accession>
<accession>P11082</accession>
<accession>Q6LDK0</accession>
<organism>
    <name type="scientific">Rattus norvegicus</name>
    <name type="common">Rat</name>
    <dbReference type="NCBI Taxonomy" id="10116"/>
    <lineage>
        <taxon>Eukaryota</taxon>
        <taxon>Metazoa</taxon>
        <taxon>Chordata</taxon>
        <taxon>Craniata</taxon>
        <taxon>Vertebrata</taxon>
        <taxon>Euteleostomi</taxon>
        <taxon>Mammalia</taxon>
        <taxon>Eutheria</taxon>
        <taxon>Euarchontoglires</taxon>
        <taxon>Glires</taxon>
        <taxon>Rodentia</taxon>
        <taxon>Myomorpha</taxon>
        <taxon>Muroidea</taxon>
        <taxon>Muridae</taxon>
        <taxon>Murinae</taxon>
        <taxon>Rattus</taxon>
    </lineage>
</organism>
<comment type="function">
    <text evidence="2">Catalytic subunit of protein phosphatase 2A (PP2A), a serine/threonine phosphatase involved in the regulation of a wide variety of enzymes, signal transduction pathways, and cellular events. PP2A can modulate the activity of phosphorylase B kinase, casein kinase 2, mitogen-stimulated S6 kinase, and MAP-2 kinase. Part of the striatin-interacting phosphatase and kinase (STRIPAK) complexes. STRIPAK complexes have critical roles in protein (de)phosphorylation and are regulators of multiple signaling pathways including Hippo, MAPK, nuclear receptor and cytoskeleton remodeling. Different types of STRIPAK complexes are involved in a variety of biological processes such as cell growth, differentiation, apoptosis, metabolism and immune regulation.</text>
</comment>
<comment type="catalytic activity">
    <reaction evidence="2">
        <text>O-phospho-L-seryl-[protein] + H2O = L-seryl-[protein] + phosphate</text>
        <dbReference type="Rhea" id="RHEA:20629"/>
        <dbReference type="Rhea" id="RHEA-COMP:9863"/>
        <dbReference type="Rhea" id="RHEA-COMP:11604"/>
        <dbReference type="ChEBI" id="CHEBI:15377"/>
        <dbReference type="ChEBI" id="CHEBI:29999"/>
        <dbReference type="ChEBI" id="CHEBI:43474"/>
        <dbReference type="ChEBI" id="CHEBI:83421"/>
        <dbReference type="EC" id="3.1.3.16"/>
    </reaction>
    <physiologicalReaction direction="left-to-right" evidence="2">
        <dbReference type="Rhea" id="RHEA:20630"/>
    </physiologicalReaction>
</comment>
<comment type="catalytic activity">
    <reaction evidence="2">
        <text>O-phospho-L-threonyl-[protein] + H2O = L-threonyl-[protein] + phosphate</text>
        <dbReference type="Rhea" id="RHEA:47004"/>
        <dbReference type="Rhea" id="RHEA-COMP:11060"/>
        <dbReference type="Rhea" id="RHEA-COMP:11605"/>
        <dbReference type="ChEBI" id="CHEBI:15377"/>
        <dbReference type="ChEBI" id="CHEBI:30013"/>
        <dbReference type="ChEBI" id="CHEBI:43474"/>
        <dbReference type="ChEBI" id="CHEBI:61977"/>
        <dbReference type="EC" id="3.1.3.16"/>
    </reaction>
    <physiologicalReaction direction="left-to-right" evidence="2">
        <dbReference type="Rhea" id="RHEA:47005"/>
    </physiologicalReaction>
</comment>
<comment type="cofactor">
    <cofactor evidence="1">
        <name>Mn(2+)</name>
        <dbReference type="ChEBI" id="CHEBI:29035"/>
    </cofactor>
    <text evidence="1">Binds 2 manganese ions per subunit.</text>
</comment>
<comment type="subunit">
    <text evidence="2 4">PP2A consists of a common heterodimeric core enzyme (composed of a 36 kDa catalytic subunit (subunit C) and a 65 kDa constant regulatory subunit (PR65) (subunit A)) that associates with a variety of regulatory subunits. Proteins that associate with the core dimer include three families of regulatory subunits B (the R2/B/PR55/B55, R3/B''/PR72/PR130/PR59 and R5/B'/B56 families), the 48 kDa variable regulatory subunit, viral proteins, and cell signaling molecules. Binds PPME1. May indirectly interact with SGO1, most probably through regulatory B56 subunits. Interacts with CTTNBP2NL. Interacts with PTPA (By similarity). Found in a complex with at least ARL2, PPP2CB, PPP2R1A, PPP2R2A, PPP2R5E and TBCD. Interacts with TBCD (By similarity). Part of the core of STRIPAK complexes composed of PP2A catalytic and scaffolding subunits, the striatins (PP2A regulatory subunits), the striatin-associated proteins MOB4, STRIP1 and STRIP2, PDCD10 and members of the STE20 kinases, such as STK24 and STK26 (By similarity).</text>
</comment>
<comment type="subcellular location">
    <subcellularLocation>
        <location evidence="2">Cytoplasm</location>
    </subcellularLocation>
    <subcellularLocation>
        <location evidence="2">Nucleus</location>
    </subcellularLocation>
    <subcellularLocation>
        <location evidence="2">Chromosome</location>
        <location evidence="2">Centromere</location>
    </subcellularLocation>
    <subcellularLocation>
        <location evidence="2">Cytoplasm</location>
        <location evidence="2">Cytoskeleton</location>
        <location evidence="2">Spindle pole</location>
    </subcellularLocation>
    <text evidence="2">In prometaphase cells, but not in anaphase cells, localizes at centromeres. During mitosis, also found at spindle poles.</text>
</comment>
<comment type="PTM">
    <text evidence="1">Reversibly methyl esterified on Leu-309 by leucine carboxyl methyltransferase 1 (Lcmt1) and protein phosphatase methylesterase 1 (Ppme1). Carboxyl methylation influences the affinity of the catalytic subunit for the different regulatory subunits, thereby modulating the PP2A holoenzyme's substrate specificity, enzyme activity and cellular localization (By similarity).</text>
</comment>
<comment type="PTM">
    <text evidence="1">Phosphorylation of either threonine (by autophosphorylation-activated protein kinase) or tyrosine results in inactivation of the phosphatase. Auto-dephosphorylation has been suggested as a mechanism for reactivation (By similarity).</text>
</comment>
<comment type="PTM">
    <text evidence="3">May be monoubiquitinated by NOSIP.</text>
</comment>
<comment type="similarity">
    <text evidence="5">Belongs to the PPP phosphatase family. PP-1 subfamily.</text>
</comment>
<reference key="1">
    <citation type="journal article" date="1989" name="Nucleic Acids Res.">
        <title>Nucleotide sequence of a rat heart cDNA encoding the isotype beta of the catalytic subunit of protein phosphatase 2A.</title>
        <authorList>
            <person name="Posas F."/>
            <person name="Arino J."/>
        </authorList>
    </citation>
    <scope>NUCLEOTIDE SEQUENCE [MRNA]</scope>
    <source>
        <tissue>Heart</tissue>
    </source>
</reference>
<reference key="2">
    <citation type="journal article" date="1988" name="Biochem. Biophys. Res. Commun.">
        <title>Molecular cloning of rat phosphoprotein phosphatase 2A beta cDNA and increased expressions of phosphatase 2A alpha and 2A beta in rat liver tumors.</title>
        <authorList>
            <person name="Kitagawa Y."/>
            <person name="Sakai R."/>
            <person name="Tahira T."/>
            <person name="Tsuda H."/>
            <person name="Ito N."/>
            <person name="Sugimura T."/>
            <person name="Nagao M."/>
        </authorList>
    </citation>
    <scope>NUCLEOTIDE SEQUENCE [MRNA]</scope>
    <source>
        <tissue>Liver</tissue>
    </source>
</reference>
<reference key="3">
    <citation type="journal article" date="2004" name="Genome Res.">
        <title>The status, quality, and expansion of the NIH full-length cDNA project: the Mammalian Gene Collection (MGC).</title>
        <authorList>
            <consortium name="The MGC Project Team"/>
        </authorList>
    </citation>
    <scope>NUCLEOTIDE SEQUENCE [LARGE SCALE MRNA]</scope>
    <source>
        <tissue>Kidney</tissue>
    </source>
</reference>
<reference key="4">
    <citation type="journal article" date="1990" name="J. Biol. Chem.">
        <title>Multiplicity of protein serine-threonine phosphatases in PC12 pheochromocytoma and FTO-2B hepatoma cells.</title>
        <authorList>
            <person name="Wadzinski B.E."/>
            <person name="Heasley L.E."/>
            <person name="Johnson G.L."/>
        </authorList>
    </citation>
    <scope>NUCLEOTIDE SEQUENCE [MRNA] OF 204-260</scope>
    <source>
        <tissue>Hepatoma</tissue>
        <tissue>Pheochromocytoma</tissue>
    </source>
</reference>
<gene>
    <name type="primary">Ppp2cb</name>
</gene>
<feature type="chain" id="PRO_0000058849" description="Serine/threonine-protein phosphatase 2A catalytic subunit beta isoform">
    <location>
        <begin position="1"/>
        <end position="309"/>
    </location>
</feature>
<feature type="active site" description="Proton donor" evidence="1">
    <location>
        <position position="118"/>
    </location>
</feature>
<feature type="binding site" evidence="1">
    <location>
        <position position="57"/>
    </location>
    <ligand>
        <name>Mn(2+)</name>
        <dbReference type="ChEBI" id="CHEBI:29035"/>
        <label>1</label>
    </ligand>
</feature>
<feature type="binding site" evidence="1">
    <location>
        <position position="59"/>
    </location>
    <ligand>
        <name>Mn(2+)</name>
        <dbReference type="ChEBI" id="CHEBI:29035"/>
        <label>1</label>
    </ligand>
</feature>
<feature type="binding site" evidence="1">
    <location>
        <position position="85"/>
    </location>
    <ligand>
        <name>Mn(2+)</name>
        <dbReference type="ChEBI" id="CHEBI:29035"/>
        <label>1</label>
    </ligand>
</feature>
<feature type="binding site" evidence="1">
    <location>
        <position position="85"/>
    </location>
    <ligand>
        <name>Mn(2+)</name>
        <dbReference type="ChEBI" id="CHEBI:29035"/>
        <label>2</label>
    </ligand>
</feature>
<feature type="binding site" evidence="1">
    <location>
        <position position="117"/>
    </location>
    <ligand>
        <name>Mn(2+)</name>
        <dbReference type="ChEBI" id="CHEBI:29035"/>
        <label>2</label>
    </ligand>
</feature>
<feature type="binding site" evidence="1">
    <location>
        <position position="167"/>
    </location>
    <ligand>
        <name>Mn(2+)</name>
        <dbReference type="ChEBI" id="CHEBI:29035"/>
        <label>2</label>
    </ligand>
</feature>
<feature type="binding site" evidence="1">
    <location>
        <position position="241"/>
    </location>
    <ligand>
        <name>Mn(2+)</name>
        <dbReference type="ChEBI" id="CHEBI:29035"/>
        <label>2</label>
    </ligand>
</feature>
<feature type="modified residue" description="Phosphotyrosine" evidence="3">
    <location>
        <position position="307"/>
    </location>
</feature>
<feature type="modified residue" description="Leucine methyl ester" evidence="2">
    <location>
        <position position="309"/>
    </location>
</feature>
<keyword id="KW-0137">Centromere</keyword>
<keyword id="KW-0158">Chromosome</keyword>
<keyword id="KW-0963">Cytoplasm</keyword>
<keyword id="KW-0206">Cytoskeleton</keyword>
<keyword id="KW-0378">Hydrolase</keyword>
<keyword id="KW-0464">Manganese</keyword>
<keyword id="KW-0479">Metal-binding</keyword>
<keyword id="KW-0488">Methylation</keyword>
<keyword id="KW-0539">Nucleus</keyword>
<keyword id="KW-0597">Phosphoprotein</keyword>
<keyword id="KW-0904">Protein phosphatase</keyword>
<keyword id="KW-1185">Reference proteome</keyword>
<keyword id="KW-0832">Ubl conjugation</keyword>
<name>PP2AB_RAT</name>
<proteinExistence type="evidence at transcript level"/>